<feature type="chain" id="PRO_0000255648" description="DNA integrity scanning protein DisA">
    <location>
        <begin position="1"/>
        <end position="357"/>
    </location>
</feature>
<feature type="domain" description="DAC" evidence="2">
    <location>
        <begin position="3"/>
        <end position="141"/>
    </location>
</feature>
<feature type="binding site" evidence="1">
    <location>
        <position position="70"/>
    </location>
    <ligand>
        <name>ATP</name>
        <dbReference type="ChEBI" id="CHEBI:30616"/>
    </ligand>
</feature>
<feature type="binding site" evidence="1">
    <location>
        <position position="88"/>
    </location>
    <ligand>
        <name>ATP</name>
        <dbReference type="ChEBI" id="CHEBI:30616"/>
    </ligand>
</feature>
<feature type="binding site" evidence="1">
    <location>
        <begin position="101"/>
        <end position="105"/>
    </location>
    <ligand>
        <name>ATP</name>
        <dbReference type="ChEBI" id="CHEBI:30616"/>
    </ligand>
</feature>
<protein>
    <recommendedName>
        <fullName evidence="1">DNA integrity scanning protein DisA</fullName>
    </recommendedName>
    <alternativeName>
        <fullName evidence="1">Cyclic di-AMP synthase</fullName>
        <shortName evidence="1">c-di-AMP synthase</shortName>
    </alternativeName>
    <alternativeName>
        <fullName evidence="1">Diadenylate cyclase</fullName>
        <ecNumber evidence="1">2.7.7.85</ecNumber>
    </alternativeName>
</protein>
<accession>Q743W9</accession>
<sequence>MTRPTLRETVARLAPGTGLRDGLERILRGRTGALIVLGNDENVEAICDGGFALDVRYAPTRLRELAKMDGAVVLSTDGSRIVRANVQLVPDPSIATDESGTRHRSAERAAIQTGYPVISVSHSMNIVTVYVGGERHVVADSATILSRANQAIATLERYKIRLDEVSRQLSRAEIEDFVTLRDVLTVVQRLELVRRIGQVIDNDVVELGTDGRQLRLQLDELLGGNDNARELIVRDYHASPEQLSEAQMTATLDELDALSDTELLDFTALAKVFGYPTTTEAQDSAVSPRGYRALAGIPRLQFAHADLLVRSFGTLQNVLAASASDLQSIDGIGAMWARHVREGLSQLAESTITDSLS</sequence>
<dbReference type="EC" id="2.7.7.85" evidence="1"/>
<dbReference type="EMBL" id="AE016958">
    <property type="protein sequence ID" value="AAS02789.1"/>
    <property type="molecule type" value="Genomic_DNA"/>
</dbReference>
<dbReference type="RefSeq" id="WP_003875630.1">
    <property type="nucleotide sequence ID" value="NZ_CP106873.1"/>
</dbReference>
<dbReference type="SMR" id="Q743W9"/>
<dbReference type="STRING" id="262316.MAP_0472c"/>
<dbReference type="KEGG" id="mpa:MAP_0472c"/>
<dbReference type="eggNOG" id="COG1623">
    <property type="taxonomic scope" value="Bacteria"/>
</dbReference>
<dbReference type="HOGENOM" id="CLU_787128_0_0_11"/>
<dbReference type="Proteomes" id="UP000000580">
    <property type="component" value="Chromosome"/>
</dbReference>
<dbReference type="GO" id="GO:0004016">
    <property type="term" value="F:adenylate cyclase activity"/>
    <property type="evidence" value="ECO:0007669"/>
    <property type="project" value="TreeGrafter"/>
</dbReference>
<dbReference type="GO" id="GO:0005524">
    <property type="term" value="F:ATP binding"/>
    <property type="evidence" value="ECO:0007669"/>
    <property type="project" value="UniProtKB-UniRule"/>
</dbReference>
<dbReference type="GO" id="GO:0106408">
    <property type="term" value="F:diadenylate cyclase activity"/>
    <property type="evidence" value="ECO:0007669"/>
    <property type="project" value="UniProtKB-EC"/>
</dbReference>
<dbReference type="GO" id="GO:0003677">
    <property type="term" value="F:DNA binding"/>
    <property type="evidence" value="ECO:0007669"/>
    <property type="project" value="UniProtKB-UniRule"/>
</dbReference>
<dbReference type="GO" id="GO:0006281">
    <property type="term" value="P:DNA repair"/>
    <property type="evidence" value="ECO:0007669"/>
    <property type="project" value="UniProtKB-UniRule"/>
</dbReference>
<dbReference type="FunFam" id="1.20.1260.110:FF:000002">
    <property type="entry name" value="DNA integrity scanning protein DisA"/>
    <property type="match status" value="1"/>
</dbReference>
<dbReference type="FunFam" id="3.40.1700.10:FF:000001">
    <property type="entry name" value="DNA integrity scanning protein DisA"/>
    <property type="match status" value="1"/>
</dbReference>
<dbReference type="Gene3D" id="1.10.150.20">
    <property type="entry name" value="5' to 3' exonuclease, C-terminal subdomain"/>
    <property type="match status" value="1"/>
</dbReference>
<dbReference type="Gene3D" id="1.20.1260.110">
    <property type="entry name" value="DNA integrity scanning linker region"/>
    <property type="match status" value="1"/>
</dbReference>
<dbReference type="Gene3D" id="3.40.1700.10">
    <property type="entry name" value="DNA integrity scanning protein, DisA, N-terminal domain"/>
    <property type="match status" value="1"/>
</dbReference>
<dbReference type="HAMAP" id="MF_01438">
    <property type="entry name" value="DisA"/>
    <property type="match status" value="1"/>
</dbReference>
<dbReference type="InterPro" id="IPR050338">
    <property type="entry name" value="DisA"/>
</dbReference>
<dbReference type="InterPro" id="IPR041663">
    <property type="entry name" value="DisA/LigA_HHH"/>
</dbReference>
<dbReference type="InterPro" id="IPR038331">
    <property type="entry name" value="DisA_sf"/>
</dbReference>
<dbReference type="InterPro" id="IPR036888">
    <property type="entry name" value="DNA_integrity_DisA_N_sf"/>
</dbReference>
<dbReference type="InterPro" id="IPR018906">
    <property type="entry name" value="DNA_integrity_scan_DisA_link"/>
</dbReference>
<dbReference type="InterPro" id="IPR003390">
    <property type="entry name" value="DNA_integrity_scan_DisA_N"/>
</dbReference>
<dbReference type="InterPro" id="IPR023763">
    <property type="entry name" value="DNA_integrity_scanning_protein"/>
</dbReference>
<dbReference type="InterPro" id="IPR010994">
    <property type="entry name" value="RuvA_2-like"/>
</dbReference>
<dbReference type="NCBIfam" id="NF010009">
    <property type="entry name" value="PRK13482.1"/>
    <property type="match status" value="1"/>
</dbReference>
<dbReference type="PANTHER" id="PTHR34185">
    <property type="entry name" value="DIADENYLATE CYCLASE"/>
    <property type="match status" value="1"/>
</dbReference>
<dbReference type="PANTHER" id="PTHR34185:SF3">
    <property type="entry name" value="DNA INTEGRITY SCANNING PROTEIN DISA"/>
    <property type="match status" value="1"/>
</dbReference>
<dbReference type="Pfam" id="PF02457">
    <property type="entry name" value="DAC"/>
    <property type="match status" value="1"/>
</dbReference>
<dbReference type="Pfam" id="PF10635">
    <property type="entry name" value="DisA-linker"/>
    <property type="match status" value="1"/>
</dbReference>
<dbReference type="Pfam" id="PF12826">
    <property type="entry name" value="HHH_2"/>
    <property type="match status" value="1"/>
</dbReference>
<dbReference type="SUPFAM" id="SSF47781">
    <property type="entry name" value="RuvA domain 2-like"/>
    <property type="match status" value="1"/>
</dbReference>
<dbReference type="SUPFAM" id="SSF143597">
    <property type="entry name" value="YojJ-like"/>
    <property type="match status" value="1"/>
</dbReference>
<dbReference type="PROSITE" id="PS51794">
    <property type="entry name" value="DAC"/>
    <property type="match status" value="1"/>
</dbReference>
<comment type="function">
    <text evidence="1">Participates in a DNA-damage check-point. DisA forms globular foci that rapidly scan along the chromosomes searching for lesions.</text>
</comment>
<comment type="function">
    <text evidence="1">Also has diadenylate cyclase activity, catalyzing the condensation of 2 ATP molecules into cyclic di-AMP (c-di-AMP). c-di-AMP likely acts as a signaling molecule that may couple DNA integrity with a cellular process.</text>
</comment>
<comment type="catalytic activity">
    <reaction evidence="1">
        <text>2 ATP = 3',3'-c-di-AMP + 2 diphosphate</text>
        <dbReference type="Rhea" id="RHEA:35655"/>
        <dbReference type="ChEBI" id="CHEBI:30616"/>
        <dbReference type="ChEBI" id="CHEBI:33019"/>
        <dbReference type="ChEBI" id="CHEBI:71500"/>
        <dbReference type="EC" id="2.7.7.85"/>
    </reaction>
</comment>
<comment type="cofactor">
    <cofactor evidence="1">
        <name>Mg(2+)</name>
        <dbReference type="ChEBI" id="CHEBI:18420"/>
    </cofactor>
</comment>
<comment type="subunit">
    <text evidence="1">Homooctamer.</text>
</comment>
<comment type="similarity">
    <text evidence="1">Belongs to the DisA family.</text>
</comment>
<reference key="1">
    <citation type="journal article" date="2005" name="Proc. Natl. Acad. Sci. U.S.A.">
        <title>The complete genome sequence of Mycobacterium avium subspecies paratuberculosis.</title>
        <authorList>
            <person name="Li L."/>
            <person name="Bannantine J.P."/>
            <person name="Zhang Q."/>
            <person name="Amonsin A."/>
            <person name="May B.J."/>
            <person name="Alt D."/>
            <person name="Banerji N."/>
            <person name="Kanjilal S."/>
            <person name="Kapur V."/>
        </authorList>
    </citation>
    <scope>NUCLEOTIDE SEQUENCE [LARGE SCALE GENOMIC DNA]</scope>
    <source>
        <strain>ATCC BAA-968 / K-10</strain>
    </source>
</reference>
<organism>
    <name type="scientific">Mycolicibacterium paratuberculosis (strain ATCC BAA-968 / K-10)</name>
    <name type="common">Mycobacterium paratuberculosis</name>
    <dbReference type="NCBI Taxonomy" id="262316"/>
    <lineage>
        <taxon>Bacteria</taxon>
        <taxon>Bacillati</taxon>
        <taxon>Actinomycetota</taxon>
        <taxon>Actinomycetes</taxon>
        <taxon>Mycobacteriales</taxon>
        <taxon>Mycobacteriaceae</taxon>
        <taxon>Mycobacterium</taxon>
        <taxon>Mycobacterium avium complex (MAC)</taxon>
    </lineage>
</organism>
<name>DISA_MYCPA</name>
<evidence type="ECO:0000255" key="1">
    <source>
        <dbReference type="HAMAP-Rule" id="MF_01438"/>
    </source>
</evidence>
<evidence type="ECO:0000255" key="2">
    <source>
        <dbReference type="PROSITE-ProRule" id="PRU01130"/>
    </source>
</evidence>
<gene>
    <name evidence="1" type="primary">disA</name>
    <name type="ordered locus">MAP_0472c</name>
</gene>
<proteinExistence type="inferred from homology"/>
<keyword id="KW-0067">ATP-binding</keyword>
<keyword id="KW-0227">DNA damage</keyword>
<keyword id="KW-0234">DNA repair</keyword>
<keyword id="KW-0238">DNA-binding</keyword>
<keyword id="KW-0460">Magnesium</keyword>
<keyword id="KW-0547">Nucleotide-binding</keyword>
<keyword id="KW-0548">Nucleotidyltransferase</keyword>
<keyword id="KW-1185">Reference proteome</keyword>
<keyword id="KW-0808">Transferase</keyword>